<reference key="1">
    <citation type="journal article" date="2005" name="Genome Res.">
        <title>Genome sequence of Blochmannia pennsylvanicus indicates parallel evolutionary trends among bacterial mutualists of insects.</title>
        <authorList>
            <person name="Degnan P.H."/>
            <person name="Lazarus A.B."/>
            <person name="Wernegreen J.J."/>
        </authorList>
    </citation>
    <scope>NUCLEOTIDE SEQUENCE [LARGE SCALE GENOMIC DNA]</scope>
    <source>
        <strain>BPEN</strain>
    </source>
</reference>
<keyword id="KW-0413">Isomerase</keyword>
<keyword id="KW-1185">Reference proteome</keyword>
<keyword id="KW-0819">tRNA processing</keyword>
<proteinExistence type="inferred from homology"/>
<feature type="chain" id="PRO_0000229342" description="tRNA pseudouridine synthase B">
    <location>
        <begin position="1"/>
        <end position="260"/>
    </location>
</feature>
<feature type="active site" description="Nucleophile" evidence="1">
    <location>
        <position position="49"/>
    </location>
</feature>
<feature type="binding site" evidence="1">
    <location>
        <position position="44"/>
    </location>
    <ligand>
        <name>substrate</name>
    </ligand>
</feature>
<feature type="binding site" evidence="1">
    <location>
        <position position="77"/>
    </location>
    <ligand>
        <name>substrate</name>
    </ligand>
</feature>
<feature type="binding site" evidence="1">
    <location>
        <position position="180"/>
    </location>
    <ligand>
        <name>substrate</name>
    </ligand>
</feature>
<feature type="binding site" evidence="1">
    <location>
        <position position="201"/>
    </location>
    <ligand>
        <name>substrate</name>
    </ligand>
</feature>
<comment type="function">
    <text evidence="1">Responsible for synthesis of pseudouridine from uracil-55 in the psi GC loop of transfer RNAs.</text>
</comment>
<comment type="catalytic activity">
    <reaction evidence="1">
        <text>uridine(55) in tRNA = pseudouridine(55) in tRNA</text>
        <dbReference type="Rhea" id="RHEA:42532"/>
        <dbReference type="Rhea" id="RHEA-COMP:10101"/>
        <dbReference type="Rhea" id="RHEA-COMP:10102"/>
        <dbReference type="ChEBI" id="CHEBI:65314"/>
        <dbReference type="ChEBI" id="CHEBI:65315"/>
        <dbReference type="EC" id="5.4.99.25"/>
    </reaction>
</comment>
<comment type="similarity">
    <text evidence="1">Belongs to the pseudouridine synthase TruB family. Type 1 subfamily.</text>
</comment>
<gene>
    <name evidence="1" type="primary">truB</name>
    <name type="ordered locus">BPEN_110</name>
</gene>
<sequence>MKRYKNVRNRDINGILLLDKPKGISSGLFLNKIKKLFNAKKIGHTGTLDPLATGMLPVCFGKATKLAKYLLHSDKRYKVSAQLGVSTDTFDSDGTIISVSPVQSNDYILEQCLESFIGIRNQIPPMFSSLKYRGVPLYKYARKGIYFPRKPRSIHIYNLSLIKKTENIIELDVHCSTGTYIRSIVNDIGEYLGCGAHVIELRRLSVGQYISSSMINPATLEAIFYNDSFDDVQVFCKLDAFLTPMNMIMLELANISNEKC</sequence>
<accession>Q493T5</accession>
<organism>
    <name type="scientific">Blochmanniella pennsylvanica (strain BPEN)</name>
    <dbReference type="NCBI Taxonomy" id="291272"/>
    <lineage>
        <taxon>Bacteria</taxon>
        <taxon>Pseudomonadati</taxon>
        <taxon>Pseudomonadota</taxon>
        <taxon>Gammaproteobacteria</taxon>
        <taxon>Enterobacterales</taxon>
        <taxon>Enterobacteriaceae</taxon>
        <taxon>ant endosymbionts</taxon>
        <taxon>Candidatus Blochmanniella</taxon>
    </lineage>
</organism>
<evidence type="ECO:0000255" key="1">
    <source>
        <dbReference type="HAMAP-Rule" id="MF_01080"/>
    </source>
</evidence>
<protein>
    <recommendedName>
        <fullName evidence="1">tRNA pseudouridine synthase B</fullName>
        <ecNumber evidence="1">5.4.99.25</ecNumber>
    </recommendedName>
    <alternativeName>
        <fullName evidence="1">tRNA pseudouridine(55) synthase</fullName>
        <shortName evidence="1">Psi55 synthase</shortName>
    </alternativeName>
    <alternativeName>
        <fullName evidence="1">tRNA pseudouridylate synthase</fullName>
    </alternativeName>
    <alternativeName>
        <fullName evidence="1">tRNA-uridine isomerase</fullName>
    </alternativeName>
</protein>
<name>TRUB_BLOPB</name>
<dbReference type="EC" id="5.4.99.25" evidence="1"/>
<dbReference type="EMBL" id="CP000016">
    <property type="protein sequence ID" value="AAZ40750.1"/>
    <property type="molecule type" value="Genomic_DNA"/>
</dbReference>
<dbReference type="RefSeq" id="WP_011282657.1">
    <property type="nucleotide sequence ID" value="NC_007292.1"/>
</dbReference>
<dbReference type="SMR" id="Q493T5"/>
<dbReference type="STRING" id="291272.BPEN_110"/>
<dbReference type="KEGG" id="bpn:BPEN_110"/>
<dbReference type="eggNOG" id="COG0130">
    <property type="taxonomic scope" value="Bacteria"/>
</dbReference>
<dbReference type="HOGENOM" id="CLU_032087_2_0_6"/>
<dbReference type="OrthoDB" id="9802309at2"/>
<dbReference type="Proteomes" id="UP000007794">
    <property type="component" value="Chromosome"/>
</dbReference>
<dbReference type="GO" id="GO:0003723">
    <property type="term" value="F:RNA binding"/>
    <property type="evidence" value="ECO:0007669"/>
    <property type="project" value="InterPro"/>
</dbReference>
<dbReference type="GO" id="GO:0160148">
    <property type="term" value="F:tRNA pseudouridine(55) synthase activity"/>
    <property type="evidence" value="ECO:0007669"/>
    <property type="project" value="UniProtKB-EC"/>
</dbReference>
<dbReference type="GO" id="GO:1990481">
    <property type="term" value="P:mRNA pseudouridine synthesis"/>
    <property type="evidence" value="ECO:0007669"/>
    <property type="project" value="TreeGrafter"/>
</dbReference>
<dbReference type="GO" id="GO:0031119">
    <property type="term" value="P:tRNA pseudouridine synthesis"/>
    <property type="evidence" value="ECO:0007669"/>
    <property type="project" value="UniProtKB-UniRule"/>
</dbReference>
<dbReference type="CDD" id="cd02573">
    <property type="entry name" value="PseudoU_synth_EcTruB"/>
    <property type="match status" value="1"/>
</dbReference>
<dbReference type="Gene3D" id="3.30.2350.10">
    <property type="entry name" value="Pseudouridine synthase"/>
    <property type="match status" value="1"/>
</dbReference>
<dbReference type="HAMAP" id="MF_01080">
    <property type="entry name" value="TruB_bact"/>
    <property type="match status" value="1"/>
</dbReference>
<dbReference type="InterPro" id="IPR020103">
    <property type="entry name" value="PsdUridine_synth_cat_dom_sf"/>
</dbReference>
<dbReference type="InterPro" id="IPR002501">
    <property type="entry name" value="PsdUridine_synth_N"/>
</dbReference>
<dbReference type="InterPro" id="IPR014780">
    <property type="entry name" value="tRNA_psdUridine_synth_TruB"/>
</dbReference>
<dbReference type="InterPro" id="IPR032819">
    <property type="entry name" value="TruB_C"/>
</dbReference>
<dbReference type="NCBIfam" id="TIGR00431">
    <property type="entry name" value="TruB"/>
    <property type="match status" value="1"/>
</dbReference>
<dbReference type="PANTHER" id="PTHR13767:SF2">
    <property type="entry name" value="PSEUDOURIDYLATE SYNTHASE TRUB1"/>
    <property type="match status" value="1"/>
</dbReference>
<dbReference type="PANTHER" id="PTHR13767">
    <property type="entry name" value="TRNA-PSEUDOURIDINE SYNTHASE"/>
    <property type="match status" value="1"/>
</dbReference>
<dbReference type="Pfam" id="PF16198">
    <property type="entry name" value="TruB_C_2"/>
    <property type="match status" value="1"/>
</dbReference>
<dbReference type="Pfam" id="PF01509">
    <property type="entry name" value="TruB_N"/>
    <property type="match status" value="1"/>
</dbReference>
<dbReference type="SUPFAM" id="SSF55120">
    <property type="entry name" value="Pseudouridine synthase"/>
    <property type="match status" value="1"/>
</dbReference>